<comment type="function">
    <text evidence="3 5 6 7">Inhibitory receptor that plays a role in the modulation of immune responses. Suppresses T-cell activation by promoting the generation of mature immunoregulatory dendritic cells (PubMed:19011627). Upon binding to its ligands PVR/CD155 or NECTIN2/CD112, which are expressed on antigen-presenting cells, sends inhibitory signals to the T-cell or NK cell. Mechanistically, interaction with ligand leads to phosphorylation of the cytoplasmic tail by Src family tyrosine kinases such as FYN or LCK, allowing subsequent binding to adapter GRB2 and SHIP1/INPP5D. In turn, inhibits PI3K and MAPK signaling cascades (PubMed:23154388). In addition, associates with beta-arrestin-2/ARRB2 to recruit SHIP1/INPP5D that suppresses autoubiquitination of TRAF6 and subsequently inhibits NF-kappa-B signaling pathway (PubMed:24817116). Also acts as a receptor for NECTIN4 to inhibit NK cell cytotoxicity (PubMed:32503945).</text>
</comment>
<comment type="subunit">
    <text evidence="4 5 7">Homodimer in cis; binds with high affinity to PVR, forming a heterotetrameric assembly of two TIGIT and two PVR molecules. Binds with lower affinity to NECTIN2 and NECTIN3. Interacts with GRB2 (PubMed:23154388). Interacts with NECTIN4 (PubMed:32503945).</text>
</comment>
<comment type="interaction">
    <interactant intactId="EBI-4314807">
        <id>Q495A1</id>
    </interactant>
    <interactant intactId="EBI-4314442">
        <id>Q15762</id>
        <label>CD226</label>
    </interactant>
    <organismsDiffer>false</organismsDiffer>
    <experiments>4</experiments>
</comment>
<comment type="interaction">
    <interactant intactId="EBI-4314807">
        <id>Q495A1</id>
    </interactant>
    <interactant intactId="EBI-3932027">
        <id>P21145</id>
        <label>MAL</label>
    </interactant>
    <organismsDiffer>false</organismsDiffer>
    <experiments>3</experiments>
</comment>
<comment type="interaction">
    <interactant intactId="EBI-4314807">
        <id>Q495A1</id>
    </interactant>
    <interactant intactId="EBI-718419">
        <id>Q92692</id>
        <label>NECTIN2</label>
    </interactant>
    <organismsDiffer>false</organismsDiffer>
    <experiments>6</experiments>
</comment>
<comment type="interaction">
    <interactant intactId="EBI-4314807">
        <id>Q495A1</id>
    </interactant>
    <interactant intactId="EBI-2826725">
        <id>Q9NQS3</id>
        <label>NECTIN3</label>
    </interactant>
    <organismsDiffer>false</organismsDiffer>
    <experiments>2</experiments>
</comment>
<comment type="interaction">
    <interactant intactId="EBI-4314807">
        <id>Q495A1</id>
    </interactant>
    <interactant intactId="EBI-4314784">
        <id>Q96NY8</id>
        <label>NECTIN4</label>
    </interactant>
    <organismsDiffer>false</organismsDiffer>
    <experiments>2</experiments>
</comment>
<comment type="interaction">
    <interactant intactId="EBI-4314807">
        <id>Q495A1</id>
    </interactant>
    <interactant intactId="EBI-3919291">
        <id>Q9Y342</id>
        <label>PLLP</label>
    </interactant>
    <organismsDiffer>false</organismsDiffer>
    <experiments>3</experiments>
</comment>
<comment type="interaction">
    <interactant intactId="EBI-4314807">
        <id>Q495A1</id>
    </interactant>
    <interactant intactId="EBI-3919694">
        <id>P15151</id>
        <label>PVR</label>
    </interactant>
    <organismsDiffer>false</organismsDiffer>
    <experiments>2</experiments>
</comment>
<comment type="interaction">
    <interactant intactId="EBI-4314807">
        <id>Q495A1</id>
    </interactant>
    <interactant intactId="EBI-4314807">
        <id>Q495A1</id>
        <label>TIGIT</label>
    </interactant>
    <organismsDiffer>false</organismsDiffer>
    <experiments>2</experiments>
</comment>
<comment type="subcellular location">
    <subcellularLocation>
        <location evidence="3 5">Cell membrane</location>
        <topology evidence="3">Single-pass type I membrane protein</topology>
    </subcellularLocation>
    <text evidence="5">Clustered to the immunological synapse where it disrupts granule polarization and cytotoxicity of NK cells once engaged with PVR.</text>
</comment>
<comment type="alternative products">
    <event type="alternative splicing"/>
    <isoform>
        <id>Q495A1-1</id>
        <name>1</name>
        <sequence type="displayed"/>
    </isoform>
    <isoform>
        <id>Q495A1-2</id>
        <name>2</name>
        <sequence type="described" ref="VSP_027634 VSP_027635"/>
    </isoform>
</comment>
<comment type="tissue specificity">
    <text evidence="3">Expressed at low levels on peripheral memory and regulatory CD4+ T-cells and NK cells and is up-regulated following activation of these cells (at protein level).</text>
</comment>
<comment type="domain">
    <text>Contains 1 copy of a cytoplasmic motif that is referred to as the immunoreceptor tyrosine-based inhibitor motif (ITIM). This motif is involved in modulation of cellular responses. The phosphorylated ITIM motif can bind the SH2 domain of several SH2-containing phosphatases.</text>
</comment>
<comment type="sequence caution" evidence="9">
    <conflict type="erroneous initiation">
        <sequence resource="EMBL-CDS" id="CAI46183"/>
    </conflict>
</comment>
<keyword id="KW-0002">3D-structure</keyword>
<keyword id="KW-0025">Alternative splicing</keyword>
<keyword id="KW-1003">Cell membrane</keyword>
<keyword id="KW-1015">Disulfide bond</keyword>
<keyword id="KW-0325">Glycoprotein</keyword>
<keyword id="KW-0393">Immunoglobulin domain</keyword>
<keyword id="KW-0472">Membrane</keyword>
<keyword id="KW-0597">Phosphoprotein</keyword>
<keyword id="KW-1267">Proteomics identification</keyword>
<keyword id="KW-1185">Reference proteome</keyword>
<keyword id="KW-0732">Signal</keyword>
<keyword id="KW-0812">Transmembrane</keyword>
<keyword id="KW-1133">Transmembrane helix</keyword>
<accession>Q495A1</accession>
<accession>Q495A3</accession>
<accession>Q5JPD8</accession>
<accession>Q6MZS2</accession>
<accession>Q8N877</accession>
<reference key="1">
    <citation type="journal article" date="2004" name="Nat. Genet.">
        <title>Complete sequencing and characterization of 21,243 full-length human cDNAs.</title>
        <authorList>
            <person name="Ota T."/>
            <person name="Suzuki Y."/>
            <person name="Nishikawa T."/>
            <person name="Otsuki T."/>
            <person name="Sugiyama T."/>
            <person name="Irie R."/>
            <person name="Wakamatsu A."/>
            <person name="Hayashi K."/>
            <person name="Sato H."/>
            <person name="Nagai K."/>
            <person name="Kimura K."/>
            <person name="Makita H."/>
            <person name="Sekine M."/>
            <person name="Obayashi M."/>
            <person name="Nishi T."/>
            <person name="Shibahara T."/>
            <person name="Tanaka T."/>
            <person name="Ishii S."/>
            <person name="Yamamoto J."/>
            <person name="Saito K."/>
            <person name="Kawai Y."/>
            <person name="Isono Y."/>
            <person name="Nakamura Y."/>
            <person name="Nagahari K."/>
            <person name="Murakami K."/>
            <person name="Yasuda T."/>
            <person name="Iwayanagi T."/>
            <person name="Wagatsuma M."/>
            <person name="Shiratori A."/>
            <person name="Sudo H."/>
            <person name="Hosoiri T."/>
            <person name="Kaku Y."/>
            <person name="Kodaira H."/>
            <person name="Kondo H."/>
            <person name="Sugawara M."/>
            <person name="Takahashi M."/>
            <person name="Kanda K."/>
            <person name="Yokoi T."/>
            <person name="Furuya T."/>
            <person name="Kikkawa E."/>
            <person name="Omura Y."/>
            <person name="Abe K."/>
            <person name="Kamihara K."/>
            <person name="Katsuta N."/>
            <person name="Sato K."/>
            <person name="Tanikawa M."/>
            <person name="Yamazaki M."/>
            <person name="Ninomiya K."/>
            <person name="Ishibashi T."/>
            <person name="Yamashita H."/>
            <person name="Murakawa K."/>
            <person name="Fujimori K."/>
            <person name="Tanai H."/>
            <person name="Kimata M."/>
            <person name="Watanabe M."/>
            <person name="Hiraoka S."/>
            <person name="Chiba Y."/>
            <person name="Ishida S."/>
            <person name="Ono Y."/>
            <person name="Takiguchi S."/>
            <person name="Watanabe S."/>
            <person name="Yosida M."/>
            <person name="Hotuta T."/>
            <person name="Kusano J."/>
            <person name="Kanehori K."/>
            <person name="Takahashi-Fujii A."/>
            <person name="Hara H."/>
            <person name="Tanase T.-O."/>
            <person name="Nomura Y."/>
            <person name="Togiya S."/>
            <person name="Komai F."/>
            <person name="Hara R."/>
            <person name="Takeuchi K."/>
            <person name="Arita M."/>
            <person name="Imose N."/>
            <person name="Musashino K."/>
            <person name="Yuuki H."/>
            <person name="Oshima A."/>
            <person name="Sasaki N."/>
            <person name="Aotsuka S."/>
            <person name="Yoshikawa Y."/>
            <person name="Matsunawa H."/>
            <person name="Ichihara T."/>
            <person name="Shiohata N."/>
            <person name="Sano S."/>
            <person name="Moriya S."/>
            <person name="Momiyama H."/>
            <person name="Satoh N."/>
            <person name="Takami S."/>
            <person name="Terashima Y."/>
            <person name="Suzuki O."/>
            <person name="Nakagawa S."/>
            <person name="Senoh A."/>
            <person name="Mizoguchi H."/>
            <person name="Goto Y."/>
            <person name="Shimizu F."/>
            <person name="Wakebe H."/>
            <person name="Hishigaki H."/>
            <person name="Watanabe T."/>
            <person name="Sugiyama A."/>
            <person name="Takemoto M."/>
            <person name="Kawakami B."/>
            <person name="Yamazaki M."/>
            <person name="Watanabe K."/>
            <person name="Kumagai A."/>
            <person name="Itakura S."/>
            <person name="Fukuzumi Y."/>
            <person name="Fujimori Y."/>
            <person name="Komiyama M."/>
            <person name="Tashiro H."/>
            <person name="Tanigami A."/>
            <person name="Fujiwara T."/>
            <person name="Ono T."/>
            <person name="Yamada K."/>
            <person name="Fujii Y."/>
            <person name="Ozaki K."/>
            <person name="Hirao M."/>
            <person name="Ohmori Y."/>
            <person name="Kawabata A."/>
            <person name="Hikiji T."/>
            <person name="Kobatake N."/>
            <person name="Inagaki H."/>
            <person name="Ikema Y."/>
            <person name="Okamoto S."/>
            <person name="Okitani R."/>
            <person name="Kawakami T."/>
            <person name="Noguchi S."/>
            <person name="Itoh T."/>
            <person name="Shigeta K."/>
            <person name="Senba T."/>
            <person name="Matsumura K."/>
            <person name="Nakajima Y."/>
            <person name="Mizuno T."/>
            <person name="Morinaga M."/>
            <person name="Sasaki M."/>
            <person name="Togashi T."/>
            <person name="Oyama M."/>
            <person name="Hata H."/>
            <person name="Watanabe M."/>
            <person name="Komatsu T."/>
            <person name="Mizushima-Sugano J."/>
            <person name="Satoh T."/>
            <person name="Shirai Y."/>
            <person name="Takahashi Y."/>
            <person name="Nakagawa K."/>
            <person name="Okumura K."/>
            <person name="Nagase T."/>
            <person name="Nomura N."/>
            <person name="Kikuchi H."/>
            <person name="Masuho Y."/>
            <person name="Yamashita R."/>
            <person name="Nakai K."/>
            <person name="Yada T."/>
            <person name="Nakamura Y."/>
            <person name="Ohara O."/>
            <person name="Isogai T."/>
            <person name="Sugano S."/>
        </authorList>
    </citation>
    <scope>NUCLEOTIDE SEQUENCE [LARGE SCALE MRNA] (ISOFORM 1)</scope>
    <source>
        <tissue>Spleen</tissue>
    </source>
</reference>
<reference key="2">
    <citation type="journal article" date="2007" name="BMC Genomics">
        <title>The full-ORF clone resource of the German cDNA consortium.</title>
        <authorList>
            <person name="Bechtel S."/>
            <person name="Rosenfelder H."/>
            <person name="Duda A."/>
            <person name="Schmidt C.P."/>
            <person name="Ernst U."/>
            <person name="Wellenreuther R."/>
            <person name="Mehrle A."/>
            <person name="Schuster C."/>
            <person name="Bahr A."/>
            <person name="Bloecker H."/>
            <person name="Heubner D."/>
            <person name="Hoerlein A."/>
            <person name="Michel G."/>
            <person name="Wedler H."/>
            <person name="Koehrer K."/>
            <person name="Ottenwaelder B."/>
            <person name="Poustka A."/>
            <person name="Wiemann S."/>
            <person name="Schupp I."/>
        </authorList>
    </citation>
    <scope>NUCLEOTIDE SEQUENCE [LARGE SCALE MRNA] (ISOFORM 1)</scope>
    <scope>NUCLEOTIDE SEQUENCE [LARGE SCALE MRNA] OF 21-244 (ISOFORM 2)</scope>
    <source>
        <tissue>Lymph node</tissue>
    </source>
</reference>
<reference key="3">
    <citation type="journal article" date="2004" name="Genome Res.">
        <title>The status, quality, and expansion of the NIH full-length cDNA project: the Mammalian Gene Collection (MGC).</title>
        <authorList>
            <consortium name="The MGC Project Team"/>
        </authorList>
    </citation>
    <scope>NUCLEOTIDE SEQUENCE [LARGE SCALE MRNA] (ISOFORM 1)</scope>
</reference>
<reference key="4">
    <citation type="journal article" date="2009" name="Nat. Immunol.">
        <title>The surface protein TIGIT suppresses T cell activation by promoting the generation of mature immunoregulatory dendritic cells.</title>
        <authorList>
            <person name="Yu X."/>
            <person name="Harden K."/>
            <person name="Gonzalez L.C."/>
            <person name="Francesco M."/>
            <person name="Chiang E."/>
            <person name="Irving B."/>
            <person name="Tom I."/>
            <person name="Ivelja S."/>
            <person name="Refino C.J."/>
            <person name="Clark H."/>
            <person name="Eaton D."/>
            <person name="Grogan J.L."/>
        </authorList>
    </citation>
    <scope>FUNCTION</scope>
    <scope>INTERACTION WITH PVR; NECTIN2 AND NECTIN3</scope>
    <scope>SUBCELLULAR LOCATION</scope>
    <scope>TISSUE SPECIFICITY</scope>
</reference>
<reference key="5">
    <citation type="journal article" date="2013" name="Cell Death Differ.">
        <title>Recruitment of Grb2 and SHIP1 by the ITT-like motif of TIGIT suppresses granule polarization and cytotoxicity of NK cells.</title>
        <authorList>
            <person name="Liu S."/>
            <person name="Zhang H."/>
            <person name="Li M."/>
            <person name="Hu D."/>
            <person name="Li C."/>
            <person name="Ge B."/>
            <person name="Jin B."/>
            <person name="Fan Z."/>
        </authorList>
    </citation>
    <scope>FUNCTION</scope>
    <scope>INTERACTION WITH GRB2</scope>
    <scope>SUBCELLULAR LOCATION</scope>
    <scope>PHOSPHORYLATION AT TYR-225</scope>
    <scope>MUTAGENESIS OF TYR-225; ASN-227 AND TYR-231</scope>
</reference>
<reference key="6">
    <citation type="journal article" date="2014" name="J. Biol. Chem.">
        <title>T-cell immunoglobulin and ITIM domain (TIGIT) receptor/poliovirus receptor (PVR) ligand engagement suppresses interferon-gamma production of natural killer cells via beta-arrestin 2-mediated negative signaling.</title>
        <authorList>
            <person name="Li M."/>
            <person name="Xia P."/>
            <person name="Du Y."/>
            <person name="Liu S."/>
            <person name="Huang G."/>
            <person name="Chen J."/>
            <person name="Zhang H."/>
            <person name="Hou N."/>
            <person name="Cheng X."/>
            <person name="Zhou L."/>
            <person name="Li P."/>
            <person name="Yang X."/>
            <person name="Fan Z."/>
        </authorList>
    </citation>
    <scope>FUNCTION</scope>
    <scope>SUBCELLULAR LOCATION</scope>
    <scope>INTERACTION WITH ARRB2</scope>
</reference>
<reference key="7">
    <citation type="journal article" date="2020" name="J. Immunother. Cancer">
        <title>Nectin4 is a novel TIGIT ligand which combines checkpoint inhibition and tumor specificity.</title>
        <authorList>
            <person name="Reches A."/>
            <person name="Ophir Y."/>
            <person name="Stein N."/>
            <person name="Kol I."/>
            <person name="Isaacson B."/>
            <person name="Charpak Amikam Y."/>
            <person name="Elnekave A."/>
            <person name="Tsukerman P."/>
            <person name="Kucan Brlic P."/>
            <person name="Lenac T."/>
            <person name="Seliger B."/>
            <person name="Jonjic S."/>
            <person name="Mandelboim O."/>
        </authorList>
    </citation>
    <scope>FUNCTION</scope>
    <scope>INTERACTION WITH NECTIN4</scope>
</reference>
<reference key="8">
    <citation type="journal article" date="2012" name="Proc. Natl. Acad. Sci. U.S.A.">
        <title>Structure of TIGIT immunoreceptor bound to poliovirus receptor reveals a cell-cell adhesion and signaling mechanism that requires cis-trans receptor clustering.</title>
        <authorList>
            <person name="Stengel K.F."/>
            <person name="Harden-Bowles K."/>
            <person name="Yu X."/>
            <person name="Rouge L."/>
            <person name="Yin J."/>
            <person name="Comps-Agrar L."/>
            <person name="Wiesmann C."/>
            <person name="Bazan J.F."/>
            <person name="Eaton D.L."/>
            <person name="Grogan J.L."/>
        </authorList>
    </citation>
    <scope>X-RAY CRYSTALLOGRAPHY (2.63 ANGSTROMS) OF 23-128 ALONE AND IN COMPLEX WITH PVR</scope>
    <scope>DISULFIDE BOND</scope>
    <scope>SUBUNIT</scope>
    <scope>MUTAGENESIS OF ILE-42</scope>
</reference>
<organism>
    <name type="scientific">Homo sapiens</name>
    <name type="common">Human</name>
    <dbReference type="NCBI Taxonomy" id="9606"/>
    <lineage>
        <taxon>Eukaryota</taxon>
        <taxon>Metazoa</taxon>
        <taxon>Chordata</taxon>
        <taxon>Craniata</taxon>
        <taxon>Vertebrata</taxon>
        <taxon>Euteleostomi</taxon>
        <taxon>Mammalia</taxon>
        <taxon>Eutheria</taxon>
        <taxon>Euarchontoglires</taxon>
        <taxon>Primates</taxon>
        <taxon>Haplorrhini</taxon>
        <taxon>Catarrhini</taxon>
        <taxon>Hominidae</taxon>
        <taxon>Homo</taxon>
    </lineage>
</organism>
<feature type="signal peptide" evidence="1">
    <location>
        <begin position="1"/>
        <end position="21"/>
    </location>
</feature>
<feature type="chain" id="PRO_0000299405" description="T-cell immunoreceptor with Ig and ITIM domains">
    <location>
        <begin position="22"/>
        <end position="244"/>
    </location>
</feature>
<feature type="topological domain" description="Extracellular" evidence="1">
    <location>
        <begin position="22"/>
        <end position="141"/>
    </location>
</feature>
<feature type="transmembrane region" description="Helical" evidence="1">
    <location>
        <begin position="142"/>
        <end position="162"/>
    </location>
</feature>
<feature type="topological domain" description="Cytoplasmic" evidence="1">
    <location>
        <begin position="163"/>
        <end position="244"/>
    </location>
</feature>
<feature type="domain" description="Ig-like V-type">
    <location>
        <begin position="22"/>
        <end position="124"/>
    </location>
</feature>
<feature type="region of interest" description="Homodimerization">
    <location>
        <begin position="32"/>
        <end position="42"/>
    </location>
</feature>
<feature type="short sequence motif" description="ITIM motif">
    <location>
        <begin position="229"/>
        <end position="234"/>
    </location>
</feature>
<feature type="modified residue" description="Phosphotyrosine" evidence="5">
    <location>
        <position position="225"/>
    </location>
</feature>
<feature type="glycosylation site" description="N-linked (GlcNAc...) asparagine" evidence="1">
    <location>
        <position position="32"/>
    </location>
</feature>
<feature type="glycosylation site" description="N-linked (GlcNAc...) asparagine" evidence="1">
    <location>
        <position position="101"/>
    </location>
</feature>
<feature type="disulfide bond" evidence="2 4">
    <location>
        <begin position="45"/>
        <end position="108"/>
    </location>
</feature>
<feature type="splice variant" id="VSP_027634" description="In isoform 2." evidence="8">
    <original>KKAL</original>
    <variation>FVCF</variation>
    <location>
        <begin position="167"/>
        <end position="170"/>
    </location>
</feature>
<feature type="splice variant" id="VSP_027635" description="In isoform 2." evidence="8">
    <location>
        <begin position="171"/>
        <end position="244"/>
    </location>
</feature>
<feature type="sequence variant" id="VAR_056079" description="In dbSNP:rs13098836.">
    <original>I</original>
    <variation>V</variation>
    <location>
        <position position="33"/>
    </location>
</feature>
<feature type="mutagenesis site" description="Abrogates interaction with PVR, cell clustering and PVR signaling." evidence="4">
    <original>I</original>
    <variation>A</variation>
    <location>
        <position position="42"/>
    </location>
</feature>
<feature type="mutagenesis site" description="Abrogates interaction with PVR, cell clustering and PVR signaling." evidence="4">
    <original>I</original>
    <variation>D</variation>
    <location>
        <position position="42"/>
    </location>
</feature>
<feature type="mutagenesis site" description="Complete loss of phosphorylation." evidence="5">
    <original>Y</original>
    <variation>A</variation>
    <location>
        <position position="225"/>
    </location>
</feature>
<feature type="mutagenesis site" description="Complete loss of binding to GRB2." evidence="5">
    <original>N</original>
    <variation>Q</variation>
    <location>
        <position position="227"/>
    </location>
</feature>
<feature type="mutagenesis site" description="No loss of phosphorylation." evidence="5">
    <original>Y</original>
    <variation>A</variation>
    <location>
        <position position="231"/>
    </location>
</feature>
<feature type="sequence conflict" description="In Ref. 3; AAI01289." evidence="9" ref="3">
    <original>T</original>
    <variation>A</variation>
    <location>
        <position position="103"/>
    </location>
</feature>
<feature type="sequence conflict" description="In Ref. 1; BAC04973." evidence="9" ref="1">
    <original>T</original>
    <variation>A</variation>
    <location>
        <position position="117"/>
    </location>
</feature>
<feature type="strand" evidence="10">
    <location>
        <begin position="26"/>
        <end position="28"/>
    </location>
</feature>
<feature type="strand" evidence="10">
    <location>
        <begin position="31"/>
        <end position="36"/>
    </location>
</feature>
<feature type="strand" evidence="10">
    <location>
        <begin position="41"/>
        <end position="43"/>
    </location>
</feature>
<feature type="strand" evidence="10">
    <location>
        <begin position="46"/>
        <end position="49"/>
    </location>
</feature>
<feature type="strand" evidence="10">
    <location>
        <begin position="53"/>
        <end position="61"/>
    </location>
</feature>
<feature type="strand" evidence="10">
    <location>
        <begin position="64"/>
        <end position="70"/>
    </location>
</feature>
<feature type="turn" evidence="10">
    <location>
        <begin position="71"/>
        <end position="73"/>
    </location>
</feature>
<feature type="strand" evidence="10">
    <location>
        <begin position="74"/>
        <end position="77"/>
    </location>
</feature>
<feature type="helix" evidence="10">
    <location>
        <begin position="79"/>
        <end position="81"/>
    </location>
</feature>
<feature type="turn" evidence="10">
    <location>
        <begin position="82"/>
        <end position="84"/>
    </location>
</feature>
<feature type="strand" evidence="10">
    <location>
        <begin position="85"/>
        <end position="87"/>
    </location>
</feature>
<feature type="strand" evidence="10">
    <location>
        <begin position="93"/>
        <end position="95"/>
    </location>
</feature>
<feature type="helix" evidence="10">
    <location>
        <begin position="100"/>
        <end position="102"/>
    </location>
</feature>
<feature type="strand" evidence="10">
    <location>
        <begin position="104"/>
        <end position="113"/>
    </location>
</feature>
<feature type="strand" evidence="10">
    <location>
        <begin position="116"/>
        <end position="127"/>
    </location>
</feature>
<evidence type="ECO:0000255" key="1"/>
<evidence type="ECO:0000255" key="2">
    <source>
        <dbReference type="PROSITE-ProRule" id="PRU00114"/>
    </source>
</evidence>
<evidence type="ECO:0000269" key="3">
    <source>
    </source>
</evidence>
<evidence type="ECO:0000269" key="4">
    <source>
    </source>
</evidence>
<evidence type="ECO:0000269" key="5">
    <source>
    </source>
</evidence>
<evidence type="ECO:0000269" key="6">
    <source>
    </source>
</evidence>
<evidence type="ECO:0000269" key="7">
    <source>
    </source>
</evidence>
<evidence type="ECO:0000303" key="8">
    <source>
    </source>
</evidence>
<evidence type="ECO:0000305" key="9"/>
<evidence type="ECO:0007829" key="10">
    <source>
        <dbReference type="PDB" id="7VYT"/>
    </source>
</evidence>
<dbReference type="EMBL" id="AK097192">
    <property type="protein sequence ID" value="BAC04973.1"/>
    <property type="molecule type" value="mRNA"/>
</dbReference>
<dbReference type="EMBL" id="AL833175">
    <property type="protein sequence ID" value="CAI46183.1"/>
    <property type="status" value="ALT_INIT"/>
    <property type="molecule type" value="mRNA"/>
</dbReference>
<dbReference type="EMBL" id="BX640915">
    <property type="protein sequence ID" value="CAE45956.1"/>
    <property type="molecule type" value="mRNA"/>
</dbReference>
<dbReference type="EMBL" id="BC101288">
    <property type="protein sequence ID" value="AAI01289.1"/>
    <property type="molecule type" value="mRNA"/>
</dbReference>
<dbReference type="EMBL" id="BC101289">
    <property type="protein sequence ID" value="AAI01290.1"/>
    <property type="molecule type" value="mRNA"/>
</dbReference>
<dbReference type="EMBL" id="BC101290">
    <property type="protein sequence ID" value="AAI01291.1"/>
    <property type="molecule type" value="mRNA"/>
</dbReference>
<dbReference type="EMBL" id="BC101291">
    <property type="protein sequence ID" value="AAI01292.1"/>
    <property type="molecule type" value="mRNA"/>
</dbReference>
<dbReference type="CCDS" id="CCDS2980.1">
    <molecule id="Q495A1-1"/>
</dbReference>
<dbReference type="RefSeq" id="NP_776160.2">
    <molecule id="Q495A1-1"/>
    <property type="nucleotide sequence ID" value="NM_173799.4"/>
</dbReference>
<dbReference type="RefSeq" id="XP_054201628.1">
    <molecule id="Q495A1-1"/>
    <property type="nucleotide sequence ID" value="XM_054345653.1"/>
</dbReference>
<dbReference type="PDB" id="3Q0H">
    <property type="method" value="X-ray"/>
    <property type="resolution" value="1.70 A"/>
    <property type="chains" value="A/B=22-137"/>
</dbReference>
<dbReference type="PDB" id="3RQ3">
    <property type="method" value="X-ray"/>
    <property type="resolution" value="2.70 A"/>
    <property type="chains" value="A/B=22-137"/>
</dbReference>
<dbReference type="PDB" id="3UCR">
    <property type="method" value="X-ray"/>
    <property type="resolution" value="2.63 A"/>
    <property type="chains" value="A/B/C/D=23-128"/>
</dbReference>
<dbReference type="PDB" id="3UDW">
    <property type="method" value="X-ray"/>
    <property type="resolution" value="2.90 A"/>
    <property type="chains" value="A/B=20-128"/>
</dbReference>
<dbReference type="PDB" id="5V52">
    <property type="method" value="X-ray"/>
    <property type="resolution" value="3.10 A"/>
    <property type="chains" value="A/B=22-128"/>
</dbReference>
<dbReference type="PDB" id="7VYT">
    <property type="method" value="X-ray"/>
    <property type="resolution" value="1.53 A"/>
    <property type="chains" value="A/T=23-129"/>
</dbReference>
<dbReference type="PDB" id="8JEL">
    <property type="method" value="X-ray"/>
    <property type="resolution" value="2.45 A"/>
    <property type="chains" value="E/H/J/L=22-128"/>
</dbReference>
<dbReference type="PDB" id="8JEN">
    <property type="method" value="X-ray"/>
    <property type="resolution" value="2.71 A"/>
    <property type="chains" value="I/J/M/P=22-128"/>
</dbReference>
<dbReference type="PDB" id="8JEO">
    <property type="method" value="X-ray"/>
    <property type="resolution" value="2.06 A"/>
    <property type="chains" value="A/D=22-128"/>
</dbReference>
<dbReference type="PDB" id="8SZY">
    <property type="method" value="X-ray"/>
    <property type="resolution" value="2.31 A"/>
    <property type="chains" value="T/U=23-128"/>
</dbReference>
<dbReference type="PDBsum" id="3Q0H"/>
<dbReference type="PDBsum" id="3RQ3"/>
<dbReference type="PDBsum" id="3UCR"/>
<dbReference type="PDBsum" id="3UDW"/>
<dbReference type="PDBsum" id="5V52"/>
<dbReference type="PDBsum" id="7VYT"/>
<dbReference type="PDBsum" id="8JEL"/>
<dbReference type="PDBsum" id="8JEN"/>
<dbReference type="PDBsum" id="8JEO"/>
<dbReference type="PDBsum" id="8SZY"/>
<dbReference type="SMR" id="Q495A1"/>
<dbReference type="BioGRID" id="128399">
    <property type="interactions" value="27"/>
</dbReference>
<dbReference type="FunCoup" id="Q495A1">
    <property type="interactions" value="333"/>
</dbReference>
<dbReference type="IntAct" id="Q495A1">
    <property type="interactions" value="26"/>
</dbReference>
<dbReference type="STRING" id="9606.ENSP00000419085"/>
<dbReference type="ChEMBL" id="CHEMBL4630878"/>
<dbReference type="GlyCosmos" id="Q495A1">
    <property type="glycosylation" value="2 sites, No reported glycans"/>
</dbReference>
<dbReference type="GlyGen" id="Q495A1">
    <property type="glycosylation" value="2 sites"/>
</dbReference>
<dbReference type="iPTMnet" id="Q495A1"/>
<dbReference type="PhosphoSitePlus" id="Q495A1"/>
<dbReference type="BioMuta" id="TIGIT"/>
<dbReference type="DMDM" id="121943253"/>
<dbReference type="MassIVE" id="Q495A1"/>
<dbReference type="PaxDb" id="9606-ENSP00000419085"/>
<dbReference type="PeptideAtlas" id="Q495A1"/>
<dbReference type="ProteomicsDB" id="61948">
    <molecule id="Q495A1-1"/>
</dbReference>
<dbReference type="ABCD" id="Q495A1">
    <property type="antibodies" value="382 sequenced antibodies"/>
</dbReference>
<dbReference type="Antibodypedia" id="53759">
    <property type="antibodies" value="561 antibodies from 33 providers"/>
</dbReference>
<dbReference type="DNASU" id="201633"/>
<dbReference type="Ensembl" id="ENST00000383671.8">
    <molecule id="Q495A1-1"/>
    <property type="protein sequence ID" value="ENSP00000373167.3"/>
    <property type="gene ID" value="ENSG00000181847.12"/>
</dbReference>
<dbReference type="Ensembl" id="ENST00000486257.5">
    <molecule id="Q495A1-1"/>
    <property type="protein sequence ID" value="ENSP00000419085.1"/>
    <property type="gene ID" value="ENSG00000181847.12"/>
</dbReference>
<dbReference type="GeneID" id="201633"/>
<dbReference type="KEGG" id="hsa:201633"/>
<dbReference type="MANE-Select" id="ENST00000383671.8">
    <property type="protein sequence ID" value="ENSP00000373167.3"/>
    <property type="RefSeq nucleotide sequence ID" value="NM_173799.4"/>
    <property type="RefSeq protein sequence ID" value="NP_776160.2"/>
</dbReference>
<dbReference type="UCSC" id="uc003ebg.3">
    <molecule id="Q495A1-1"/>
    <property type="organism name" value="human"/>
</dbReference>
<dbReference type="AGR" id="HGNC:26838"/>
<dbReference type="CTD" id="201633"/>
<dbReference type="DisGeNET" id="201633"/>
<dbReference type="GeneCards" id="TIGIT"/>
<dbReference type="HGNC" id="HGNC:26838">
    <property type="gene designation" value="TIGIT"/>
</dbReference>
<dbReference type="HPA" id="ENSG00000181847">
    <property type="expression patterns" value="Tissue enriched (lymphoid)"/>
</dbReference>
<dbReference type="MIM" id="612859">
    <property type="type" value="gene"/>
</dbReference>
<dbReference type="neXtProt" id="NX_Q495A1"/>
<dbReference type="OpenTargets" id="ENSG00000181847"/>
<dbReference type="PharmGKB" id="PA164726482"/>
<dbReference type="VEuPathDB" id="HostDB:ENSG00000181847"/>
<dbReference type="eggNOG" id="ENOG502SQW2">
    <property type="taxonomic scope" value="Eukaryota"/>
</dbReference>
<dbReference type="GeneTree" id="ENSGT00390000012671"/>
<dbReference type="HOGENOM" id="CLU_073090_0_0_1"/>
<dbReference type="InParanoid" id="Q495A1"/>
<dbReference type="OMA" id="TSTWFQI"/>
<dbReference type="OrthoDB" id="9948163at2759"/>
<dbReference type="PAN-GO" id="Q495A1">
    <property type="GO annotations" value="5 GO annotations based on evolutionary models"/>
</dbReference>
<dbReference type="PhylomeDB" id="Q495A1"/>
<dbReference type="TreeFam" id="TF338423"/>
<dbReference type="PathwayCommons" id="Q495A1"/>
<dbReference type="SignaLink" id="Q495A1"/>
<dbReference type="SIGNOR" id="Q495A1"/>
<dbReference type="BioGRID-ORCS" id="201633">
    <property type="hits" value="7 hits in 1146 CRISPR screens"/>
</dbReference>
<dbReference type="ChiTaRS" id="TIGIT">
    <property type="organism name" value="human"/>
</dbReference>
<dbReference type="EvolutionaryTrace" id="Q495A1"/>
<dbReference type="GenomeRNAi" id="201633"/>
<dbReference type="Pharos" id="Q495A1">
    <property type="development level" value="Tbio"/>
</dbReference>
<dbReference type="PRO" id="PR:Q495A1"/>
<dbReference type="Proteomes" id="UP000005640">
    <property type="component" value="Chromosome 3"/>
</dbReference>
<dbReference type="RNAct" id="Q495A1">
    <property type="molecule type" value="protein"/>
</dbReference>
<dbReference type="Bgee" id="ENSG00000181847">
    <property type="expression patterns" value="Expressed in granulocyte and 106 other cell types or tissues"/>
</dbReference>
<dbReference type="ExpressionAtlas" id="Q495A1">
    <property type="expression patterns" value="baseline and differential"/>
</dbReference>
<dbReference type="GO" id="GO:0009986">
    <property type="term" value="C:cell surface"/>
    <property type="evidence" value="ECO:0000314"/>
    <property type="project" value="UniProtKB"/>
</dbReference>
<dbReference type="GO" id="GO:0005886">
    <property type="term" value="C:plasma membrane"/>
    <property type="evidence" value="ECO:0000314"/>
    <property type="project" value="UniProt"/>
</dbReference>
<dbReference type="GO" id="GO:0042802">
    <property type="term" value="F:identical protein binding"/>
    <property type="evidence" value="ECO:0000353"/>
    <property type="project" value="IntAct"/>
</dbReference>
<dbReference type="GO" id="GO:0038023">
    <property type="term" value="F:signaling receptor activity"/>
    <property type="evidence" value="ECO:0000314"/>
    <property type="project" value="UniProt"/>
</dbReference>
<dbReference type="GO" id="GO:0005102">
    <property type="term" value="F:signaling receptor binding"/>
    <property type="evidence" value="ECO:0000353"/>
    <property type="project" value="MGI"/>
</dbReference>
<dbReference type="GO" id="GO:0032695">
    <property type="term" value="P:negative regulation of interleukin-12 production"/>
    <property type="evidence" value="ECO:0000315"/>
    <property type="project" value="UniProtKB"/>
</dbReference>
<dbReference type="GO" id="GO:0045953">
    <property type="term" value="P:negative regulation of natural killer cell mediated cytotoxicity"/>
    <property type="evidence" value="ECO:0000314"/>
    <property type="project" value="UniProt"/>
</dbReference>
<dbReference type="GO" id="GO:0050868">
    <property type="term" value="P:negative regulation of T cell activation"/>
    <property type="evidence" value="ECO:0000314"/>
    <property type="project" value="MGI"/>
</dbReference>
<dbReference type="GO" id="GO:0032733">
    <property type="term" value="P:positive regulation of interleukin-10 production"/>
    <property type="evidence" value="ECO:0000315"/>
    <property type="project" value="UniProtKB"/>
</dbReference>
<dbReference type="FunFam" id="2.60.40.10:FF:001182">
    <property type="entry name" value="T-cell immunoreceptor with Ig and ITIM domains"/>
    <property type="match status" value="1"/>
</dbReference>
<dbReference type="Gene3D" id="2.60.40.10">
    <property type="entry name" value="Immunoglobulins"/>
    <property type="match status" value="1"/>
</dbReference>
<dbReference type="InterPro" id="IPR007110">
    <property type="entry name" value="Ig-like_dom"/>
</dbReference>
<dbReference type="InterPro" id="IPR036179">
    <property type="entry name" value="Ig-like_dom_sf"/>
</dbReference>
<dbReference type="InterPro" id="IPR013783">
    <property type="entry name" value="Ig-like_fold"/>
</dbReference>
<dbReference type="InterPro" id="IPR003599">
    <property type="entry name" value="Ig_sub"/>
</dbReference>
<dbReference type="InterPro" id="IPR013106">
    <property type="entry name" value="Ig_V-set"/>
</dbReference>
<dbReference type="InterPro" id="IPR042948">
    <property type="entry name" value="TIGIT"/>
</dbReference>
<dbReference type="PANTHER" id="PTHR47734:SF1">
    <property type="entry name" value="T-CELL IMMUNORECEPTOR WITH IG AND ITIM DOMAINS"/>
    <property type="match status" value="1"/>
</dbReference>
<dbReference type="PANTHER" id="PTHR47734">
    <property type="entry name" value="T-CELL IMMUNORECEPTOR WITH IG AND ITIM DOMAINS PROTEIN, TIGIT"/>
    <property type="match status" value="1"/>
</dbReference>
<dbReference type="Pfam" id="PF07686">
    <property type="entry name" value="V-set"/>
    <property type="match status" value="1"/>
</dbReference>
<dbReference type="SMART" id="SM00409">
    <property type="entry name" value="IG"/>
    <property type="match status" value="1"/>
</dbReference>
<dbReference type="SUPFAM" id="SSF48726">
    <property type="entry name" value="Immunoglobulin"/>
    <property type="match status" value="1"/>
</dbReference>
<dbReference type="PROSITE" id="PS50835">
    <property type="entry name" value="IG_LIKE"/>
    <property type="match status" value="1"/>
</dbReference>
<proteinExistence type="evidence at protein level"/>
<sequence>MRWCLLLIWAQGLRQAPLASGMMTGTIETTGNISAEKGGSIILQCHLSSTTAQVTQVNWEQQDQLLAICNADLGWHISPSFKDRVAPGPGLGLTLQSLTVNDTGEYFCIYHTYPDGTYTGRIFLEVLESSVAEHGARFQIPLLGAMAATLVVICTAVIVVVALTRKKKALRIHSVEGDLRRKSAGQEEWSPSAPSPPGSCVQAEAAPAGLCGEQRGEDCAELHDYFNVLSYRSLGNCSFFTETG</sequence>
<name>TIGIT_HUMAN</name>
<gene>
    <name type="primary">TIGIT</name>
    <name type="synonym">VSIG9</name>
    <name type="synonym">VSTM3</name>
</gene>
<protein>
    <recommendedName>
        <fullName>T-cell immunoreceptor with Ig and ITIM domains</fullName>
    </recommendedName>
    <alternativeName>
        <fullName>V-set and immunoglobulin domain-containing protein 9</fullName>
    </alternativeName>
    <alternativeName>
        <fullName>V-set and transmembrane domain-containing protein 3</fullName>
    </alternativeName>
</protein>